<evidence type="ECO:0000250" key="1"/>
<evidence type="ECO:0000305" key="2"/>
<organism>
    <name type="scientific">Leishmania mexicana</name>
    <dbReference type="NCBI Taxonomy" id="5665"/>
    <lineage>
        <taxon>Eukaryota</taxon>
        <taxon>Discoba</taxon>
        <taxon>Euglenozoa</taxon>
        <taxon>Kinetoplastea</taxon>
        <taxon>Metakinetoplastina</taxon>
        <taxon>Trypanosomatida</taxon>
        <taxon>Trypanosomatidae</taxon>
        <taxon>Leishmaniinae</taxon>
        <taxon>Leishmania</taxon>
    </lineage>
</organism>
<dbReference type="EMBL" id="Z49881">
    <property type="protein sequence ID" value="CAA90037.1"/>
    <property type="molecule type" value="Genomic_DNA"/>
</dbReference>
<dbReference type="PIR" id="S70645">
    <property type="entry name" value="S70645"/>
</dbReference>
<dbReference type="SMR" id="Q25330"/>
<dbReference type="VEuPathDB" id="TriTrypDB:LmxM.31.3790"/>
<dbReference type="OMA" id="MSENEWR"/>
<dbReference type="GO" id="GO:0016538">
    <property type="term" value="F:cyclin-dependent protein serine/threonine kinase regulator activity"/>
    <property type="evidence" value="ECO:0007669"/>
    <property type="project" value="InterPro"/>
</dbReference>
<dbReference type="GO" id="GO:0051301">
    <property type="term" value="P:cell division"/>
    <property type="evidence" value="ECO:0007669"/>
    <property type="project" value="UniProtKB-KW"/>
</dbReference>
<dbReference type="FunFam" id="3.30.170.10:FF:000006">
    <property type="entry name" value="Cyclin-dependent kinases regulatory subunit"/>
    <property type="match status" value="1"/>
</dbReference>
<dbReference type="Gene3D" id="3.30.170.10">
    <property type="entry name" value="Cyclin-dependent kinase, regulatory subunit"/>
    <property type="match status" value="1"/>
</dbReference>
<dbReference type="InterPro" id="IPR000789">
    <property type="entry name" value="Cyclin-dep_kinase_reg-sub"/>
</dbReference>
<dbReference type="InterPro" id="IPR036858">
    <property type="entry name" value="Cyclin-dep_kinase_reg-sub_sf"/>
</dbReference>
<dbReference type="PANTHER" id="PTHR23415">
    <property type="entry name" value="CYCLIN-DEPENDENT KINASES REGULATORY SUBUNIT/60S RIBOSOME SUBUNIT BIOGENESIS PROTEIN NIP7"/>
    <property type="match status" value="1"/>
</dbReference>
<dbReference type="Pfam" id="PF01111">
    <property type="entry name" value="CKS"/>
    <property type="match status" value="1"/>
</dbReference>
<dbReference type="PRINTS" id="PR00296">
    <property type="entry name" value="CYCLINKINASE"/>
</dbReference>
<dbReference type="SMART" id="SM01084">
    <property type="entry name" value="CKS"/>
    <property type="match status" value="1"/>
</dbReference>
<dbReference type="SUPFAM" id="SSF55637">
    <property type="entry name" value="Cell cycle regulatory proteins"/>
    <property type="match status" value="1"/>
</dbReference>
<dbReference type="PROSITE" id="PS00944">
    <property type="entry name" value="CKS_1"/>
    <property type="match status" value="1"/>
</dbReference>
<dbReference type="PROSITE" id="PS00945">
    <property type="entry name" value="CKS_2"/>
    <property type="match status" value="1"/>
</dbReference>
<comment type="function">
    <text>Binds to the catalytic subunit of the cyclin dependent kinases (Cdc2) and is essential for their biological function.</text>
</comment>
<comment type="subunit">
    <text evidence="1">Forms a homohexamer that can probably bind six kinase subunits.</text>
</comment>
<comment type="similarity">
    <text evidence="2">Belongs to the CKS family.</text>
</comment>
<accession>Q25330</accession>
<sequence length="99" mass="11832">MPAKPAQDFFSLDANGQREALIIIKKLQCKILYSDKYYDDMFEYRHVILPKDLARLVPTSRLMSEMEWRQLGVQQSQGWVHYMIHKPEPHVLLFKRPRT</sequence>
<protein>
    <recommendedName>
        <fullName>Cyclin-dependent kinases regulatory subunit</fullName>
    </recommendedName>
    <alternativeName>
        <fullName>P12LMMCKS1</fullName>
    </alternativeName>
</protein>
<name>CKS1_LEIME</name>
<reference key="1">
    <citation type="journal article" date="1996" name="Biochem. J.">
        <title>Leishmania mexicana p12cks1, a homologue of fission yeast p13suc1, associates with a stage-regulated histone H1 kinase.</title>
        <authorList>
            <person name="Mottram J.C."/>
            <person name="Grant K.M."/>
        </authorList>
    </citation>
    <scope>NUCLEOTIDE SEQUENCE [GENOMIC DNA]</scope>
    <source>
        <strain>MNYC/BZ/62/M379</strain>
    </source>
</reference>
<proteinExistence type="inferred from homology"/>
<feature type="chain" id="PRO_0000206243" description="Cyclin-dependent kinases regulatory subunit">
    <location>
        <begin position="1"/>
        <end position="99"/>
    </location>
</feature>
<keyword id="KW-0131">Cell cycle</keyword>
<keyword id="KW-0132">Cell division</keyword>